<feature type="transit peptide" description="Mitochondrion" evidence="2">
    <location>
        <begin position="1"/>
        <end status="unknown"/>
    </location>
</feature>
<feature type="chain" id="PRO_0000280642" description="Cytochrome c oxidase assembly protein COX16, mitochondrial">
    <location>
        <begin status="unknown"/>
        <end position="128"/>
    </location>
</feature>
<feature type="transmembrane region" description="Helical" evidence="2">
    <location>
        <begin position="33"/>
        <end position="53"/>
    </location>
</feature>
<organism>
    <name type="scientific">Candida albicans (strain SC5314 / ATCC MYA-2876)</name>
    <name type="common">Yeast</name>
    <dbReference type="NCBI Taxonomy" id="237561"/>
    <lineage>
        <taxon>Eukaryota</taxon>
        <taxon>Fungi</taxon>
        <taxon>Dikarya</taxon>
        <taxon>Ascomycota</taxon>
        <taxon>Saccharomycotina</taxon>
        <taxon>Pichiomycetes</taxon>
        <taxon>Debaryomycetaceae</taxon>
        <taxon>Candida/Lodderomyces clade</taxon>
        <taxon>Candida</taxon>
    </lineage>
</organism>
<accession>Q5ACH7</accession>
<accession>A0A1D8PUB2</accession>
<proteinExistence type="inferred from homology"/>
<protein>
    <recommendedName>
        <fullName>Cytochrome c oxidase assembly protein COX16, mitochondrial</fullName>
    </recommendedName>
</protein>
<gene>
    <name type="primary">COX16</name>
    <name type="ordered locus">CAALFM_CR10760CA</name>
    <name type="ORF">CaO19.7665</name>
</gene>
<reference key="1">
    <citation type="journal article" date="2004" name="Proc. Natl. Acad. Sci. U.S.A.">
        <title>The diploid genome sequence of Candida albicans.</title>
        <authorList>
            <person name="Jones T."/>
            <person name="Federspiel N.A."/>
            <person name="Chibana H."/>
            <person name="Dungan J."/>
            <person name="Kalman S."/>
            <person name="Magee B.B."/>
            <person name="Newport G."/>
            <person name="Thorstenson Y.R."/>
            <person name="Agabian N."/>
            <person name="Magee P.T."/>
            <person name="Davis R.W."/>
            <person name="Scherer S."/>
        </authorList>
    </citation>
    <scope>NUCLEOTIDE SEQUENCE [LARGE SCALE GENOMIC DNA]</scope>
    <source>
        <strain>SC5314 / ATCC MYA-2876</strain>
    </source>
</reference>
<reference key="2">
    <citation type="journal article" date="2007" name="Genome Biol.">
        <title>Assembly of the Candida albicans genome into sixteen supercontigs aligned on the eight chromosomes.</title>
        <authorList>
            <person name="van het Hoog M."/>
            <person name="Rast T.J."/>
            <person name="Martchenko M."/>
            <person name="Grindle S."/>
            <person name="Dignard D."/>
            <person name="Hogues H."/>
            <person name="Cuomo C."/>
            <person name="Berriman M."/>
            <person name="Scherer S."/>
            <person name="Magee B.B."/>
            <person name="Whiteway M."/>
            <person name="Chibana H."/>
            <person name="Nantel A."/>
            <person name="Magee P.T."/>
        </authorList>
    </citation>
    <scope>GENOME REANNOTATION</scope>
    <source>
        <strain>SC5314 / ATCC MYA-2876</strain>
    </source>
</reference>
<reference key="3">
    <citation type="journal article" date="2013" name="Genome Biol.">
        <title>Assembly of a phased diploid Candida albicans genome facilitates allele-specific measurements and provides a simple model for repeat and indel structure.</title>
        <authorList>
            <person name="Muzzey D."/>
            <person name="Schwartz K."/>
            <person name="Weissman J.S."/>
            <person name="Sherlock G."/>
        </authorList>
    </citation>
    <scope>NUCLEOTIDE SEQUENCE [LARGE SCALE GENOMIC DNA]</scope>
    <scope>GENOME REANNOTATION</scope>
    <source>
        <strain>SC5314 / ATCC MYA-2876</strain>
    </source>
</reference>
<sequence length="128" mass="15377">MSYSGNRVFRGKKEQEAYDKTLAGRYVKLVKKNHFLFFGLPFLVSIVAGSIYLQKFTSVKWEKYDEKYQQLGEEEMLNLIENKRTVDKKNDYYRLQGLLNDHTNQVADDYEIVRVQRRKEDEPVWDRQ</sequence>
<evidence type="ECO:0000250" key="1">
    <source>
        <dbReference type="UniProtKB" id="P47081"/>
    </source>
</evidence>
<evidence type="ECO:0000255" key="2"/>
<evidence type="ECO:0000305" key="3"/>
<name>COX16_CANAL</name>
<comment type="function">
    <text evidence="1">Required for the assembly of the mitochondrial respiratory chain complex IV (CIV), also known as cytochrome c oxidase. May participate in merging the COX1 and COX2 assembly lines.</text>
</comment>
<comment type="subcellular location">
    <subcellularLocation>
        <location evidence="1">Mitochondrion inner membrane</location>
        <topology evidence="1">Single-pass membrane protein</topology>
    </subcellularLocation>
</comment>
<comment type="similarity">
    <text evidence="3">Belongs to the COX16 family.</text>
</comment>
<dbReference type="EMBL" id="CP017630">
    <property type="protein sequence ID" value="AOW31724.1"/>
    <property type="molecule type" value="Genomic_DNA"/>
</dbReference>
<dbReference type="RefSeq" id="XP_719424.1">
    <property type="nucleotide sequence ID" value="XM_714331.1"/>
</dbReference>
<dbReference type="SMR" id="Q5ACH7"/>
<dbReference type="FunCoup" id="Q5ACH7">
    <property type="interactions" value="149"/>
</dbReference>
<dbReference type="STRING" id="237561.Q5ACH7"/>
<dbReference type="EnsemblFungi" id="CR_10760C_A-T">
    <property type="protein sequence ID" value="CR_10760C_A-T-p1"/>
    <property type="gene ID" value="CR_10760C_A"/>
</dbReference>
<dbReference type="GeneID" id="3638943"/>
<dbReference type="KEGG" id="cal:CAALFM_CR10760CA"/>
<dbReference type="CGD" id="CAL0000184804">
    <property type="gene designation" value="orf19.7665"/>
</dbReference>
<dbReference type="VEuPathDB" id="FungiDB:CR_10760C_A"/>
<dbReference type="eggNOG" id="ENOG502S9GT">
    <property type="taxonomic scope" value="Eukaryota"/>
</dbReference>
<dbReference type="HOGENOM" id="CLU_131611_1_0_1"/>
<dbReference type="InParanoid" id="Q5ACH7"/>
<dbReference type="OMA" id="VNMKDEY"/>
<dbReference type="OrthoDB" id="5516033at2759"/>
<dbReference type="Proteomes" id="UP000000559">
    <property type="component" value="Chromosome R"/>
</dbReference>
<dbReference type="GO" id="GO:0005743">
    <property type="term" value="C:mitochondrial inner membrane"/>
    <property type="evidence" value="ECO:0000318"/>
    <property type="project" value="GO_Central"/>
</dbReference>
<dbReference type="GO" id="GO:0033617">
    <property type="term" value="P:mitochondrial cytochrome c oxidase assembly"/>
    <property type="evidence" value="ECO:0000318"/>
    <property type="project" value="GO_Central"/>
</dbReference>
<dbReference type="InterPro" id="IPR020164">
    <property type="entry name" value="Cyt_c_Oxase_assmbl_COX16"/>
</dbReference>
<dbReference type="PANTHER" id="PTHR17130:SF14">
    <property type="entry name" value="CYTOCHROME C OXIDASE ASSEMBLY PROTEIN COX16 HOMOLOG, MITOCHONDRIAL"/>
    <property type="match status" value="1"/>
</dbReference>
<dbReference type="PANTHER" id="PTHR17130">
    <property type="entry name" value="MITOCHONDRIAL OUTER MEMBRANE PROTEIN 25"/>
    <property type="match status" value="1"/>
</dbReference>
<dbReference type="Pfam" id="PF14138">
    <property type="entry name" value="COX16"/>
    <property type="match status" value="1"/>
</dbReference>
<keyword id="KW-0472">Membrane</keyword>
<keyword id="KW-0496">Mitochondrion</keyword>
<keyword id="KW-0999">Mitochondrion inner membrane</keyword>
<keyword id="KW-1185">Reference proteome</keyword>
<keyword id="KW-0809">Transit peptide</keyword>
<keyword id="KW-0812">Transmembrane</keyword>
<keyword id="KW-1133">Transmembrane helix</keyword>